<reference key="1">
    <citation type="submission" date="2007-05" db="EMBL/GenBank/DDBJ databases">
        <title>Complete sequence of Thermotoga petrophila RKU-1.</title>
        <authorList>
            <consortium name="US DOE Joint Genome Institute"/>
            <person name="Copeland A."/>
            <person name="Lucas S."/>
            <person name="Lapidus A."/>
            <person name="Barry K."/>
            <person name="Glavina del Rio T."/>
            <person name="Dalin E."/>
            <person name="Tice H."/>
            <person name="Pitluck S."/>
            <person name="Sims D."/>
            <person name="Brettin T."/>
            <person name="Bruce D."/>
            <person name="Detter J.C."/>
            <person name="Han C."/>
            <person name="Tapia R."/>
            <person name="Schmutz J."/>
            <person name="Larimer F."/>
            <person name="Land M."/>
            <person name="Hauser L."/>
            <person name="Kyrpides N."/>
            <person name="Mikhailova N."/>
            <person name="Nelson K."/>
            <person name="Gogarten J.P."/>
            <person name="Noll K."/>
            <person name="Richardson P."/>
        </authorList>
    </citation>
    <scope>NUCLEOTIDE SEQUENCE [LARGE SCALE GENOMIC DNA]</scope>
    <source>
        <strain>ATCC BAA-488 / DSM 13995 / JCM 10881 / RKU-1</strain>
    </source>
</reference>
<proteinExistence type="inferred from homology"/>
<keyword id="KW-0408">Iron</keyword>
<keyword id="KW-0456">Lyase</keyword>
<keyword id="KW-0464">Manganese</keyword>
<comment type="function">
    <text evidence="1">Catalyzes the dehydration of D-mannonate.</text>
</comment>
<comment type="catalytic activity">
    <reaction evidence="1">
        <text>D-mannonate = 2-dehydro-3-deoxy-D-gluconate + H2O</text>
        <dbReference type="Rhea" id="RHEA:20097"/>
        <dbReference type="ChEBI" id="CHEBI:15377"/>
        <dbReference type="ChEBI" id="CHEBI:17767"/>
        <dbReference type="ChEBI" id="CHEBI:57990"/>
        <dbReference type="EC" id="4.2.1.8"/>
    </reaction>
</comment>
<comment type="cofactor">
    <cofactor evidence="1">
        <name>Fe(2+)</name>
        <dbReference type="ChEBI" id="CHEBI:29033"/>
    </cofactor>
    <cofactor evidence="1">
        <name>Mn(2+)</name>
        <dbReference type="ChEBI" id="CHEBI:29035"/>
    </cofactor>
</comment>
<comment type="pathway">
    <text evidence="1">Carbohydrate metabolism; pentose and glucuronate interconversion.</text>
</comment>
<comment type="similarity">
    <text evidence="1">Belongs to the mannonate dehydratase family.</text>
</comment>
<name>UXUA_THEP1</name>
<feature type="chain" id="PRO_1000034340" description="Mannonate dehydratase">
    <location>
        <begin position="1"/>
        <end position="360"/>
    </location>
</feature>
<evidence type="ECO:0000255" key="1">
    <source>
        <dbReference type="HAMAP-Rule" id="MF_00106"/>
    </source>
</evidence>
<accession>A5IL01</accession>
<protein>
    <recommendedName>
        <fullName evidence="1">Mannonate dehydratase</fullName>
        <ecNumber evidence="1">4.2.1.8</ecNumber>
    </recommendedName>
    <alternativeName>
        <fullName evidence="1">D-mannonate hydro-lyase</fullName>
    </alternativeName>
</protein>
<organism>
    <name type="scientific">Thermotoga petrophila (strain ATCC BAA-488 / DSM 13995 / JCM 10881 / RKU-1)</name>
    <dbReference type="NCBI Taxonomy" id="390874"/>
    <lineage>
        <taxon>Bacteria</taxon>
        <taxon>Thermotogati</taxon>
        <taxon>Thermotogota</taxon>
        <taxon>Thermotogae</taxon>
        <taxon>Thermotogales</taxon>
        <taxon>Thermotogaceae</taxon>
        <taxon>Thermotoga</taxon>
    </lineage>
</organism>
<dbReference type="EC" id="4.2.1.8" evidence="1"/>
<dbReference type="EMBL" id="CP000702">
    <property type="protein sequence ID" value="ABQ46874.1"/>
    <property type="molecule type" value="Genomic_DNA"/>
</dbReference>
<dbReference type="RefSeq" id="WP_011943439.1">
    <property type="nucleotide sequence ID" value="NC_009486.1"/>
</dbReference>
<dbReference type="SMR" id="A5IL01"/>
<dbReference type="STRING" id="390874.Tpet_0855"/>
<dbReference type="KEGG" id="tpt:Tpet_0855"/>
<dbReference type="eggNOG" id="COG1312">
    <property type="taxonomic scope" value="Bacteria"/>
</dbReference>
<dbReference type="HOGENOM" id="CLU_058621_1_0_0"/>
<dbReference type="UniPathway" id="UPA00246"/>
<dbReference type="Proteomes" id="UP000006558">
    <property type="component" value="Chromosome"/>
</dbReference>
<dbReference type="GO" id="GO:0008198">
    <property type="term" value="F:ferrous iron binding"/>
    <property type="evidence" value="ECO:0007669"/>
    <property type="project" value="TreeGrafter"/>
</dbReference>
<dbReference type="GO" id="GO:0030145">
    <property type="term" value="F:manganese ion binding"/>
    <property type="evidence" value="ECO:0007669"/>
    <property type="project" value="TreeGrafter"/>
</dbReference>
<dbReference type="GO" id="GO:0008927">
    <property type="term" value="F:mannonate dehydratase activity"/>
    <property type="evidence" value="ECO:0007669"/>
    <property type="project" value="UniProtKB-UniRule"/>
</dbReference>
<dbReference type="GO" id="GO:0042840">
    <property type="term" value="P:D-glucuronate catabolic process"/>
    <property type="evidence" value="ECO:0007669"/>
    <property type="project" value="TreeGrafter"/>
</dbReference>
<dbReference type="Gene3D" id="3.20.20.150">
    <property type="entry name" value="Divalent-metal-dependent TIM barrel enzymes"/>
    <property type="match status" value="1"/>
</dbReference>
<dbReference type="HAMAP" id="MF_00106">
    <property type="entry name" value="UxuA"/>
    <property type="match status" value="1"/>
</dbReference>
<dbReference type="InterPro" id="IPR004628">
    <property type="entry name" value="Man_deHydtase"/>
</dbReference>
<dbReference type="InterPro" id="IPR036237">
    <property type="entry name" value="Xyl_isomerase-like_sf"/>
</dbReference>
<dbReference type="NCBIfam" id="NF003027">
    <property type="entry name" value="PRK03906.1"/>
    <property type="match status" value="1"/>
</dbReference>
<dbReference type="NCBIfam" id="TIGR00695">
    <property type="entry name" value="uxuA"/>
    <property type="match status" value="1"/>
</dbReference>
<dbReference type="PANTHER" id="PTHR30387">
    <property type="entry name" value="MANNONATE DEHYDRATASE"/>
    <property type="match status" value="1"/>
</dbReference>
<dbReference type="PANTHER" id="PTHR30387:SF2">
    <property type="entry name" value="MANNONATE DEHYDRATASE"/>
    <property type="match status" value="1"/>
</dbReference>
<dbReference type="Pfam" id="PF03786">
    <property type="entry name" value="UxuA"/>
    <property type="match status" value="1"/>
</dbReference>
<dbReference type="PIRSF" id="PIRSF016049">
    <property type="entry name" value="Man_dehyd"/>
    <property type="match status" value="1"/>
</dbReference>
<dbReference type="SUPFAM" id="SSF51658">
    <property type="entry name" value="Xylose isomerase-like"/>
    <property type="match status" value="1"/>
</dbReference>
<sequence length="360" mass="41857">MKLVFRWYGEKHDTVTLEQIRQIPGVEGVVGALFDIPVGEVWPLEEIMKLKETVEKAGLKLEVIESVNVHEDIKLGLPTRDRYIENYKETIRNLAKAGVKVVCYNFMPVFDWMRTDLHKKLPDGSETMEYDHRLIEGVTPDELIKRVKEGSQGFVLPGWEWDRLEKLRETFELYKNVDEEKLFENLVYFLERVIPVCEECDVKLAIHPDDPPWSIFGLPRIITNKENIERMLKAVDSPYNGITFCMGSLGANPENNIPEMIRYFGKMGRIHFAHVRNLKFTGEKSFYETAHPSFCGSHDLFEVMKAFHDIGYEGYIRPDHGRLIWGEKARPGYGLYDRALGATYILGLWEAIDKMKKRYC</sequence>
<gene>
    <name evidence="1" type="primary">uxuA</name>
    <name type="ordered locus">Tpet_0855</name>
</gene>